<sequence length="554" mass="57836">MNPSTTQARVVVDELIRGGVRDVVLCPGSRNAPLAFALQDADRSGRIRLHVRIDERTAGYLAIGLAIGAGAPVCVAMTSGTAVANLGPAVVEANYARVPLIVLSANRPYELLGTGANQTMEQLGYFGTQVRASISLGLAEDAPERTSALNATWRSATCRVLAAATGARTANAGPVHFDIPLREPLVPDPEPLGAVTPPGRPAGKPWTYTPPVTFDQPLDIDLSVDTVVISGHGAGVHPNLAALPTVAEPTAPRSGDNPLHPLALPLLRPQQVIMLGRPTLHRPVSVLLADAEVPVFALTTGPRWPDVSGNSQATGTRAVTTGAPRPAWLDRCAAMNRHAIAAVREQLAAHPLTTGLHVAAAVSHALRPGDQLVLGASNPVRDVALAGLDTRGIRVRSNRGVAGIDGTVSTAIGAALAYEGAHERTGSPDSPPRTIALIGDLTFVHDSSGLLIGPTEPIPRSLTIVVSNDNGGGIFELLEQGDPRFSDVSSRIFGTPHDVDVGALCRAYHVESRQIEVDELGPTLDQPGAGMRVLEVKADRSSLRQLHAAIKAAL</sequence>
<feature type="chain" id="PRO_0000341785" description="2-succinyl-5-enolpyruvyl-6-hydroxy-3-cyclohexene-1-carboxylate synthase">
    <location>
        <begin position="1"/>
        <end position="554"/>
    </location>
</feature>
<gene>
    <name evidence="1" type="primary">menD</name>
    <name type="ordered locus">MRA_0562</name>
</gene>
<protein>
    <recommendedName>
        <fullName evidence="1">2-succinyl-5-enolpyruvyl-6-hydroxy-3-cyclohexene-1-carboxylate synthase</fullName>
        <shortName evidence="1">SEPHCHC synthase</shortName>
        <ecNumber evidence="1">2.2.1.9</ecNumber>
    </recommendedName>
    <alternativeName>
        <fullName evidence="1">Menaquinone biosynthesis protein MenD</fullName>
    </alternativeName>
</protein>
<proteinExistence type="inferred from homology"/>
<reference key="1">
    <citation type="journal article" date="2008" name="PLoS ONE">
        <title>Genetic basis of virulence attenuation revealed by comparative genomic analysis of Mycobacterium tuberculosis strain H37Ra versus H37Rv.</title>
        <authorList>
            <person name="Zheng H."/>
            <person name="Lu L."/>
            <person name="Wang B."/>
            <person name="Pu S."/>
            <person name="Zhang X."/>
            <person name="Zhu G."/>
            <person name="Shi W."/>
            <person name="Zhang L."/>
            <person name="Wang H."/>
            <person name="Wang S."/>
            <person name="Zhao G."/>
            <person name="Zhang Y."/>
        </authorList>
    </citation>
    <scope>NUCLEOTIDE SEQUENCE [LARGE SCALE GENOMIC DNA]</scope>
    <source>
        <strain>ATCC 25177 / H37Ra</strain>
    </source>
</reference>
<organism>
    <name type="scientific">Mycobacterium tuberculosis (strain ATCC 25177 / H37Ra)</name>
    <dbReference type="NCBI Taxonomy" id="419947"/>
    <lineage>
        <taxon>Bacteria</taxon>
        <taxon>Bacillati</taxon>
        <taxon>Actinomycetota</taxon>
        <taxon>Actinomycetes</taxon>
        <taxon>Mycobacteriales</taxon>
        <taxon>Mycobacteriaceae</taxon>
        <taxon>Mycobacterium</taxon>
        <taxon>Mycobacterium tuberculosis complex</taxon>
    </lineage>
</organism>
<evidence type="ECO:0000255" key="1">
    <source>
        <dbReference type="HAMAP-Rule" id="MF_01659"/>
    </source>
</evidence>
<comment type="function">
    <text evidence="1">Catalyzes the thiamine diphosphate-dependent decarboxylation of 2-oxoglutarate and the subsequent addition of the resulting succinic semialdehyde-thiamine pyrophosphate anion to isochorismate to yield 2-succinyl-5-enolpyruvyl-6-hydroxy-3-cyclohexene-1-carboxylate (SEPHCHC).</text>
</comment>
<comment type="catalytic activity">
    <reaction evidence="1">
        <text>isochorismate + 2-oxoglutarate + H(+) = 5-enolpyruvoyl-6-hydroxy-2-succinyl-cyclohex-3-ene-1-carboxylate + CO2</text>
        <dbReference type="Rhea" id="RHEA:25593"/>
        <dbReference type="ChEBI" id="CHEBI:15378"/>
        <dbReference type="ChEBI" id="CHEBI:16526"/>
        <dbReference type="ChEBI" id="CHEBI:16810"/>
        <dbReference type="ChEBI" id="CHEBI:29780"/>
        <dbReference type="ChEBI" id="CHEBI:58818"/>
        <dbReference type="EC" id="2.2.1.9"/>
    </reaction>
</comment>
<comment type="cofactor">
    <cofactor evidence="1">
        <name>Mg(2+)</name>
        <dbReference type="ChEBI" id="CHEBI:18420"/>
    </cofactor>
    <cofactor evidence="1">
        <name>Mn(2+)</name>
        <dbReference type="ChEBI" id="CHEBI:29035"/>
    </cofactor>
</comment>
<comment type="cofactor">
    <cofactor evidence="1">
        <name>thiamine diphosphate</name>
        <dbReference type="ChEBI" id="CHEBI:58937"/>
    </cofactor>
    <text evidence="1">Binds 1 thiamine pyrophosphate per subunit.</text>
</comment>
<comment type="pathway">
    <text evidence="1">Quinol/quinone metabolism; 1,4-dihydroxy-2-naphthoate biosynthesis; 1,4-dihydroxy-2-naphthoate from chorismate: step 2/7.</text>
</comment>
<comment type="pathway">
    <text evidence="1">Quinol/quinone metabolism; menaquinone biosynthesis.</text>
</comment>
<comment type="subunit">
    <text evidence="1">Homodimer.</text>
</comment>
<comment type="similarity">
    <text evidence="1">Belongs to the TPP enzyme family. MenD subfamily.</text>
</comment>
<dbReference type="EC" id="2.2.1.9" evidence="1"/>
<dbReference type="EMBL" id="CP000611">
    <property type="protein sequence ID" value="ABQ72285.1"/>
    <property type="molecule type" value="Genomic_DNA"/>
</dbReference>
<dbReference type="RefSeq" id="WP_003402927.1">
    <property type="nucleotide sequence ID" value="NZ_CP016972.1"/>
</dbReference>
<dbReference type="SMR" id="A5TZT5"/>
<dbReference type="KEGG" id="mra:MRA_0562"/>
<dbReference type="eggNOG" id="COG1165">
    <property type="taxonomic scope" value="Bacteria"/>
</dbReference>
<dbReference type="HOGENOM" id="CLU_006051_4_1_11"/>
<dbReference type="UniPathway" id="UPA00079"/>
<dbReference type="UniPathway" id="UPA01057">
    <property type="reaction ID" value="UER00164"/>
</dbReference>
<dbReference type="Proteomes" id="UP000001988">
    <property type="component" value="Chromosome"/>
</dbReference>
<dbReference type="GO" id="GO:0070204">
    <property type="term" value="F:2-succinyl-5-enolpyruvyl-6-hydroxy-3-cyclohexene-1-carboxylic-acid synthase activity"/>
    <property type="evidence" value="ECO:0007669"/>
    <property type="project" value="UniProtKB-UniRule"/>
</dbReference>
<dbReference type="GO" id="GO:0000287">
    <property type="term" value="F:magnesium ion binding"/>
    <property type="evidence" value="ECO:0007669"/>
    <property type="project" value="UniProtKB-UniRule"/>
</dbReference>
<dbReference type="GO" id="GO:0030145">
    <property type="term" value="F:manganese ion binding"/>
    <property type="evidence" value="ECO:0007669"/>
    <property type="project" value="UniProtKB-UniRule"/>
</dbReference>
<dbReference type="GO" id="GO:0030976">
    <property type="term" value="F:thiamine pyrophosphate binding"/>
    <property type="evidence" value="ECO:0007669"/>
    <property type="project" value="UniProtKB-UniRule"/>
</dbReference>
<dbReference type="GO" id="GO:0009234">
    <property type="term" value="P:menaquinone biosynthetic process"/>
    <property type="evidence" value="ECO:0007669"/>
    <property type="project" value="UniProtKB-UniRule"/>
</dbReference>
<dbReference type="CDD" id="cd07037">
    <property type="entry name" value="TPP_PYR_MenD"/>
    <property type="match status" value="1"/>
</dbReference>
<dbReference type="CDD" id="cd02009">
    <property type="entry name" value="TPP_SHCHC_synthase"/>
    <property type="match status" value="1"/>
</dbReference>
<dbReference type="FunFam" id="3.40.50.970:FF:000066">
    <property type="entry name" value="2-succinyl-5-enolpyruvyl-6-hydroxy-3-cyclohexene-1-carboxylate synthase"/>
    <property type="match status" value="1"/>
</dbReference>
<dbReference type="FunFam" id="3.40.50.970:FF:000068">
    <property type="entry name" value="2-succinyl-5-enolpyruvyl-6-hydroxy-3-cyclohexene-1-carboxylate synthase"/>
    <property type="match status" value="1"/>
</dbReference>
<dbReference type="Gene3D" id="3.40.50.970">
    <property type="match status" value="2"/>
</dbReference>
<dbReference type="Gene3D" id="3.40.50.1220">
    <property type="entry name" value="TPP-binding domain"/>
    <property type="match status" value="1"/>
</dbReference>
<dbReference type="HAMAP" id="MF_01659">
    <property type="entry name" value="MenD"/>
    <property type="match status" value="1"/>
</dbReference>
<dbReference type="InterPro" id="IPR004433">
    <property type="entry name" value="MenaQ_synth_MenD"/>
</dbReference>
<dbReference type="InterPro" id="IPR029061">
    <property type="entry name" value="THDP-binding"/>
</dbReference>
<dbReference type="InterPro" id="IPR012001">
    <property type="entry name" value="Thiamin_PyroP_enz_TPP-bd_dom"/>
</dbReference>
<dbReference type="NCBIfam" id="TIGR00173">
    <property type="entry name" value="menD"/>
    <property type="match status" value="1"/>
</dbReference>
<dbReference type="PANTHER" id="PTHR42916">
    <property type="entry name" value="2-SUCCINYL-5-ENOLPYRUVYL-6-HYDROXY-3-CYCLOHEXENE-1-CARBOXYLATE SYNTHASE"/>
    <property type="match status" value="1"/>
</dbReference>
<dbReference type="PANTHER" id="PTHR42916:SF1">
    <property type="entry name" value="PROTEIN PHYLLO, CHLOROPLASTIC"/>
    <property type="match status" value="1"/>
</dbReference>
<dbReference type="Pfam" id="PF02776">
    <property type="entry name" value="TPP_enzyme_N"/>
    <property type="match status" value="1"/>
</dbReference>
<dbReference type="PIRSF" id="PIRSF004983">
    <property type="entry name" value="MenD"/>
    <property type="match status" value="1"/>
</dbReference>
<dbReference type="SUPFAM" id="SSF52518">
    <property type="entry name" value="Thiamin diphosphate-binding fold (THDP-binding)"/>
    <property type="match status" value="2"/>
</dbReference>
<keyword id="KW-0460">Magnesium</keyword>
<keyword id="KW-0464">Manganese</keyword>
<keyword id="KW-0474">Menaquinone biosynthesis</keyword>
<keyword id="KW-0479">Metal-binding</keyword>
<keyword id="KW-1185">Reference proteome</keyword>
<keyword id="KW-0786">Thiamine pyrophosphate</keyword>
<keyword id="KW-0808">Transferase</keyword>
<name>MEND_MYCTA</name>
<accession>A5TZT5</accession>